<sequence>MSSPTSVEEDGDIKLKTRFHGQVVVLYARPPLILDDFFALLRDACKQHAKQDITVKWIDEDGDPISIDSQMELDEAVRCLNVSQEAELNIHVFVGKPELPGLPCQGEDKTVYRRGARRWKKIYLYNGHRFQGKRLNRRIQCFICHDYIWGIGRQGFRCVDCRLCVHKKCHRHVRTHCGQTPQGPNVPVAPSSGVGSLRGGRLDTSSSTTRSGGGIDNGAFHEHEIESPGSAKDMSRSTNGNGASKWAVSLNDFRLLTVIGRGSYAKVVQAEHIATRQIYAIKIIKKEMFNEDEDIDWVQTEKSVFEAASNYPFLVGLHSCFQTESRLFFVIEFVPGGDLMFHMQQQRRLPEEHARFYSGEIILALHFLHSRGIIYRDLKLDNVLIDAEGHIKLTDYGMCKENINAGDLTSTFCGTPNYIAPEILRGDEYGFSVDWWALGVLMFEMMAGRSPFDIVGMQNSEENTEDYLFQIILERQIRIPRSLSVRASNILKGFLNKDPSQRLGCKLDINDGLNDMKEHDFFRGFIDWEALEQKAVAPPYHPAVESDRDLTHFDHQFTDEPPQLSPDNSAVIARIDQSEFDGFEYVNPLQMSREDSV</sequence>
<keyword id="KW-0067">ATP-binding</keyword>
<keyword id="KW-0963">Cytoplasm</keyword>
<keyword id="KW-0206">Cytoskeleton</keyword>
<keyword id="KW-0217">Developmental protein</keyword>
<keyword id="KW-0221">Differentiation</keyword>
<keyword id="KW-0278">Fertilization</keyword>
<keyword id="KW-0306">Gastrulation</keyword>
<keyword id="KW-0334">Gonadal differentiation</keyword>
<keyword id="KW-0418">Kinase</keyword>
<keyword id="KW-0460">Magnesium</keyword>
<keyword id="KW-0479">Metal-binding</keyword>
<keyword id="KW-0547">Nucleotide-binding</keyword>
<keyword id="KW-0597">Phosphoprotein</keyword>
<keyword id="KW-1185">Reference proteome</keyword>
<keyword id="KW-0723">Serine/threonine-protein kinase</keyword>
<keyword id="KW-0808">Transferase</keyword>
<keyword id="KW-0862">Zinc</keyword>
<keyword id="KW-0863">Zinc-finger</keyword>
<proteinExistence type="inferred from homology"/>
<comment type="function">
    <text evidence="3">Required for the normal progression of embryogenesis and viability of the organism. Plays an indispensable role in establishing embryonic polarity and in recruiting and maintaining par-6 to the periphery, through interaction with par-3. Required for epithelial cell polarity in the distal spermatheca. Phosphorylates serine residues of num-1. Required for the expression of antimicrobial peptide nlp-29 in response in response to fungal infection or physical injury.</text>
</comment>
<comment type="catalytic activity">
    <reaction evidence="3">
        <text>L-seryl-[protein] + ATP = O-phospho-L-seryl-[protein] + ADP + H(+)</text>
        <dbReference type="Rhea" id="RHEA:17989"/>
        <dbReference type="Rhea" id="RHEA-COMP:9863"/>
        <dbReference type="Rhea" id="RHEA-COMP:11604"/>
        <dbReference type="ChEBI" id="CHEBI:15378"/>
        <dbReference type="ChEBI" id="CHEBI:29999"/>
        <dbReference type="ChEBI" id="CHEBI:30616"/>
        <dbReference type="ChEBI" id="CHEBI:83421"/>
        <dbReference type="ChEBI" id="CHEBI:456216"/>
        <dbReference type="EC" id="2.7.11.13"/>
    </reaction>
</comment>
<comment type="catalytic activity">
    <reaction evidence="3">
        <text>L-threonyl-[protein] + ATP = O-phospho-L-threonyl-[protein] + ADP + H(+)</text>
        <dbReference type="Rhea" id="RHEA:46608"/>
        <dbReference type="Rhea" id="RHEA-COMP:11060"/>
        <dbReference type="Rhea" id="RHEA-COMP:11605"/>
        <dbReference type="ChEBI" id="CHEBI:15378"/>
        <dbReference type="ChEBI" id="CHEBI:30013"/>
        <dbReference type="ChEBI" id="CHEBI:30616"/>
        <dbReference type="ChEBI" id="CHEBI:61977"/>
        <dbReference type="ChEBI" id="CHEBI:456216"/>
        <dbReference type="EC" id="2.7.11.13"/>
    </reaction>
</comment>
<comment type="cofactor">
    <cofactor evidence="3">
        <name>Mg(2+)</name>
        <dbReference type="ChEBI" id="CHEBI:18420"/>
    </cofactor>
</comment>
<comment type="subunit">
    <text evidence="3">Interaction with par-3 required for the peripheral localization of par-6 and to form a par-3/par-6/pkc-3 complex, which is activated when cdc-42 interacts with par-6. Binds avidly to the phosphotyrosine interaction domain (PID) of a novel pkc-3 adapter protein num-1, which enables tethering and targeting of pkc-3 to the cell periphery (By similarity).</text>
</comment>
<comment type="subcellular location">
    <subcellularLocation>
        <location evidence="3">Cytoplasm</location>
    </subcellularLocation>
    <subcellularLocation>
        <location evidence="3">Cytoplasm</location>
        <location evidence="3">Cytoskeleton</location>
    </subcellularLocation>
    <text evidence="1">Targeted and anchored at the apical surface (villi) of intestinal and pharyngeal cells, and in proximity with the cortical actin cytoskeleton that lies under the plasma membrane. Tightly bound to organelles/cytoskeleton in six of the seven developmental stages. Accumulation in cytoplasm is restricted to L1 larvae and adults. Colocalized with par-3 at the anterior cortex of the 1-cell embryo (By similarity).</text>
</comment>
<comment type="similarity">
    <text evidence="4">Belongs to the protein kinase superfamily. AGC Ser/Thr protein kinase family. PKC subfamily.</text>
</comment>
<feature type="chain" id="PRO_0000318077" description="Protein kinase C-like 3">
    <location>
        <begin position="1"/>
        <end position="597"/>
    </location>
</feature>
<feature type="domain" description="PB1" evidence="8">
    <location>
        <begin position="12"/>
        <end position="95"/>
    </location>
</feature>
<feature type="domain" description="Protein kinase" evidence="5">
    <location>
        <begin position="253"/>
        <end position="522"/>
    </location>
</feature>
<feature type="domain" description="AGC-kinase C-terminal" evidence="7">
    <location>
        <begin position="524"/>
        <end position="595"/>
    </location>
</feature>
<feature type="zinc finger region" description="Phorbol-ester/DAG-type" evidence="6">
    <location>
        <begin position="127"/>
        <end position="177"/>
    </location>
</feature>
<feature type="region of interest" description="Disordered" evidence="10">
    <location>
        <begin position="181"/>
        <end position="238"/>
    </location>
</feature>
<feature type="active site" description="Proton acceptor" evidence="2 5 9">
    <location>
        <position position="377"/>
    </location>
</feature>
<feature type="binding site" evidence="2 5">
    <location>
        <begin position="259"/>
        <end position="267"/>
    </location>
    <ligand>
        <name>ATP</name>
        <dbReference type="ChEBI" id="CHEBI:30616"/>
    </ligand>
</feature>
<feature type="binding site" evidence="2 5">
    <location>
        <position position="282"/>
    </location>
    <ligand>
        <name>ATP</name>
        <dbReference type="ChEBI" id="CHEBI:30616"/>
    </ligand>
</feature>
<evidence type="ECO:0000250" key="1"/>
<evidence type="ECO:0000250" key="2">
    <source>
        <dbReference type="UniProtKB" id="P41743"/>
    </source>
</evidence>
<evidence type="ECO:0000250" key="3">
    <source>
        <dbReference type="UniProtKB" id="Q19266"/>
    </source>
</evidence>
<evidence type="ECO:0000255" key="4"/>
<evidence type="ECO:0000255" key="5">
    <source>
        <dbReference type="PROSITE-ProRule" id="PRU00159"/>
    </source>
</evidence>
<evidence type="ECO:0000255" key="6">
    <source>
        <dbReference type="PROSITE-ProRule" id="PRU00226"/>
    </source>
</evidence>
<evidence type="ECO:0000255" key="7">
    <source>
        <dbReference type="PROSITE-ProRule" id="PRU00618"/>
    </source>
</evidence>
<evidence type="ECO:0000255" key="8">
    <source>
        <dbReference type="PROSITE-ProRule" id="PRU01081"/>
    </source>
</evidence>
<evidence type="ECO:0000255" key="9">
    <source>
        <dbReference type="PROSITE-ProRule" id="PRU10027"/>
    </source>
</evidence>
<evidence type="ECO:0000256" key="10">
    <source>
        <dbReference type="SAM" id="MobiDB-lite"/>
    </source>
</evidence>
<name>KPC3_CAEBR</name>
<protein>
    <recommendedName>
        <fullName>Protein kinase C-like 3</fullName>
        <ecNumber>2.7.11.13</ecNumber>
    </recommendedName>
    <alternativeName>
        <fullName>Atypical protein kinase C-3</fullName>
        <shortName>aPKC3</shortName>
    </alternativeName>
</protein>
<accession>A8WUG4</accession>
<dbReference type="EC" id="2.7.11.13"/>
<dbReference type="EMBL" id="HE601438">
    <property type="protein sequence ID" value="CAP24126.3"/>
    <property type="molecule type" value="Genomic_DNA"/>
</dbReference>
<dbReference type="SMR" id="A8WUG4"/>
<dbReference type="FunCoup" id="A8WUG4">
    <property type="interactions" value="2492"/>
</dbReference>
<dbReference type="STRING" id="6238.A8WUG4"/>
<dbReference type="EnsemblMetazoa" id="CBG02381.1">
    <property type="protein sequence ID" value="CBG02381.1"/>
    <property type="gene ID" value="WBGene00025443"/>
</dbReference>
<dbReference type="KEGG" id="cbr:CBG_02381"/>
<dbReference type="CTD" id="8572216"/>
<dbReference type="WormBase" id="CBG02381">
    <property type="protein sequence ID" value="CBP00699"/>
    <property type="gene ID" value="WBGene00025443"/>
    <property type="gene designation" value="Cbr-pkc-3"/>
</dbReference>
<dbReference type="eggNOG" id="KOG0695">
    <property type="taxonomic scope" value="Eukaryota"/>
</dbReference>
<dbReference type="HOGENOM" id="CLU_000288_63_29_1"/>
<dbReference type="InParanoid" id="A8WUG4"/>
<dbReference type="OMA" id="FINPEIM"/>
<dbReference type="OrthoDB" id="63267at2759"/>
<dbReference type="Proteomes" id="UP000008549">
    <property type="component" value="Unassembled WGS sequence"/>
</dbReference>
<dbReference type="GO" id="GO:0016324">
    <property type="term" value="C:apical plasma membrane"/>
    <property type="evidence" value="ECO:0007669"/>
    <property type="project" value="EnsemblMetazoa"/>
</dbReference>
<dbReference type="GO" id="GO:0030864">
    <property type="term" value="C:cortical actin cytoskeleton"/>
    <property type="evidence" value="ECO:0000250"/>
    <property type="project" value="UniProtKB"/>
</dbReference>
<dbReference type="GO" id="GO:0005829">
    <property type="term" value="C:cytosol"/>
    <property type="evidence" value="ECO:0007669"/>
    <property type="project" value="EnsemblMetazoa"/>
</dbReference>
<dbReference type="GO" id="GO:0005886">
    <property type="term" value="C:plasma membrane"/>
    <property type="evidence" value="ECO:0000250"/>
    <property type="project" value="UniProtKB"/>
</dbReference>
<dbReference type="GO" id="GO:0005524">
    <property type="term" value="F:ATP binding"/>
    <property type="evidence" value="ECO:0007669"/>
    <property type="project" value="UniProtKB-KW"/>
</dbReference>
<dbReference type="GO" id="GO:0004697">
    <property type="term" value="F:diacylglycerol-dependent serine/threonine kinase activity"/>
    <property type="evidence" value="ECO:0007669"/>
    <property type="project" value="UniProtKB-EC"/>
</dbReference>
<dbReference type="GO" id="GO:0019904">
    <property type="term" value="F:protein domain specific binding"/>
    <property type="evidence" value="ECO:0000250"/>
    <property type="project" value="UniProtKB"/>
</dbReference>
<dbReference type="GO" id="GO:0106310">
    <property type="term" value="F:protein serine kinase activity"/>
    <property type="evidence" value="ECO:0007669"/>
    <property type="project" value="RHEA"/>
</dbReference>
<dbReference type="GO" id="GO:0004674">
    <property type="term" value="F:protein serine/threonine kinase activity"/>
    <property type="evidence" value="ECO:0000250"/>
    <property type="project" value="UniProtKB"/>
</dbReference>
<dbReference type="GO" id="GO:0008270">
    <property type="term" value="F:zinc ion binding"/>
    <property type="evidence" value="ECO:0007669"/>
    <property type="project" value="UniProtKB-KW"/>
</dbReference>
<dbReference type="GO" id="GO:0061760">
    <property type="term" value="P:antifungal innate immune response"/>
    <property type="evidence" value="ECO:0007669"/>
    <property type="project" value="EnsemblMetazoa"/>
</dbReference>
<dbReference type="GO" id="GO:0030154">
    <property type="term" value="P:cell differentiation"/>
    <property type="evidence" value="ECO:0007669"/>
    <property type="project" value="UniProtKB-KW"/>
</dbReference>
<dbReference type="GO" id="GO:0009792">
    <property type="term" value="P:embryo development ending in birth or egg hatching"/>
    <property type="evidence" value="ECO:0007669"/>
    <property type="project" value="EnsemblMetazoa"/>
</dbReference>
<dbReference type="GO" id="GO:0030010">
    <property type="term" value="P:establishment of cell polarity"/>
    <property type="evidence" value="ECO:0000318"/>
    <property type="project" value="GO_Central"/>
</dbReference>
<dbReference type="GO" id="GO:0007163">
    <property type="term" value="P:establishment or maintenance of cell polarity"/>
    <property type="evidence" value="ECO:0000250"/>
    <property type="project" value="UniProtKB"/>
</dbReference>
<dbReference type="GO" id="GO:0007369">
    <property type="term" value="P:gastrulation"/>
    <property type="evidence" value="ECO:0007669"/>
    <property type="project" value="UniProtKB-KW"/>
</dbReference>
<dbReference type="GO" id="GO:0008406">
    <property type="term" value="P:gonad development"/>
    <property type="evidence" value="ECO:0000250"/>
    <property type="project" value="UniProtKB"/>
</dbReference>
<dbReference type="GO" id="GO:0007506">
    <property type="term" value="P:gonadal mesoderm development"/>
    <property type="evidence" value="ECO:0007669"/>
    <property type="project" value="UniProtKB-KW"/>
</dbReference>
<dbReference type="GO" id="GO:0035556">
    <property type="term" value="P:intracellular signal transduction"/>
    <property type="evidence" value="ECO:0000318"/>
    <property type="project" value="GO_Central"/>
</dbReference>
<dbReference type="GO" id="GO:0072659">
    <property type="term" value="P:protein localization to plasma membrane"/>
    <property type="evidence" value="ECO:0000318"/>
    <property type="project" value="GO_Central"/>
</dbReference>
<dbReference type="GO" id="GO:0009611">
    <property type="term" value="P:response to wounding"/>
    <property type="evidence" value="ECO:0007669"/>
    <property type="project" value="EnsemblMetazoa"/>
</dbReference>
<dbReference type="GO" id="GO:0007338">
    <property type="term" value="P:single fertilization"/>
    <property type="evidence" value="ECO:0007669"/>
    <property type="project" value="UniProtKB-KW"/>
</dbReference>
<dbReference type="CDD" id="cd20794">
    <property type="entry name" value="C1_aPKC"/>
    <property type="match status" value="1"/>
</dbReference>
<dbReference type="FunFam" id="1.10.510.10:FF:000048">
    <property type="entry name" value="Protein kinase C"/>
    <property type="match status" value="1"/>
</dbReference>
<dbReference type="FunFam" id="3.10.20.90:FF:000071">
    <property type="entry name" value="Protein kinase C"/>
    <property type="match status" value="1"/>
</dbReference>
<dbReference type="FunFam" id="3.30.200.20:FF:000070">
    <property type="entry name" value="Protein kinase C"/>
    <property type="match status" value="1"/>
</dbReference>
<dbReference type="FunFam" id="3.30.60.20:FF:000012">
    <property type="entry name" value="Protein kinase C"/>
    <property type="match status" value="1"/>
</dbReference>
<dbReference type="Gene3D" id="3.30.60.20">
    <property type="match status" value="1"/>
</dbReference>
<dbReference type="Gene3D" id="3.10.20.90">
    <property type="entry name" value="Phosphatidylinositol 3-kinase Catalytic Subunit, Chain A, domain 1"/>
    <property type="match status" value="1"/>
</dbReference>
<dbReference type="Gene3D" id="3.30.200.20">
    <property type="entry name" value="Phosphorylase Kinase, domain 1"/>
    <property type="match status" value="1"/>
</dbReference>
<dbReference type="Gene3D" id="1.10.510.10">
    <property type="entry name" value="Transferase(Phosphotransferase) domain 1"/>
    <property type="match status" value="1"/>
</dbReference>
<dbReference type="InterPro" id="IPR000961">
    <property type="entry name" value="AGC-kinase_C"/>
</dbReference>
<dbReference type="InterPro" id="IPR046349">
    <property type="entry name" value="C1-like_sf"/>
</dbReference>
<dbReference type="InterPro" id="IPR020454">
    <property type="entry name" value="DAG/PE-bd"/>
</dbReference>
<dbReference type="InterPro" id="IPR011009">
    <property type="entry name" value="Kinase-like_dom_sf"/>
</dbReference>
<dbReference type="InterPro" id="IPR053793">
    <property type="entry name" value="PB1-like"/>
</dbReference>
<dbReference type="InterPro" id="IPR000270">
    <property type="entry name" value="PB1_dom"/>
</dbReference>
<dbReference type="InterPro" id="IPR002219">
    <property type="entry name" value="PE/DAG-bd"/>
</dbReference>
<dbReference type="InterPro" id="IPR012233">
    <property type="entry name" value="PKC"/>
</dbReference>
<dbReference type="InterPro" id="IPR017892">
    <property type="entry name" value="Pkinase_C"/>
</dbReference>
<dbReference type="InterPro" id="IPR000719">
    <property type="entry name" value="Prot_kinase_dom"/>
</dbReference>
<dbReference type="InterPro" id="IPR017441">
    <property type="entry name" value="Protein_kinase_ATP_BS"/>
</dbReference>
<dbReference type="InterPro" id="IPR008271">
    <property type="entry name" value="Ser/Thr_kinase_AS"/>
</dbReference>
<dbReference type="PANTHER" id="PTHR24351">
    <property type="entry name" value="RIBOSOMAL PROTEIN S6 KINASE"/>
    <property type="match status" value="1"/>
</dbReference>
<dbReference type="Pfam" id="PF00130">
    <property type="entry name" value="C1_1"/>
    <property type="match status" value="1"/>
</dbReference>
<dbReference type="Pfam" id="PF00564">
    <property type="entry name" value="PB1"/>
    <property type="match status" value="1"/>
</dbReference>
<dbReference type="Pfam" id="PF00069">
    <property type="entry name" value="Pkinase"/>
    <property type="match status" value="1"/>
</dbReference>
<dbReference type="Pfam" id="PF00433">
    <property type="entry name" value="Pkinase_C"/>
    <property type="match status" value="1"/>
</dbReference>
<dbReference type="PIRSF" id="PIRSF000554">
    <property type="entry name" value="PKC_zeta"/>
    <property type="match status" value="1"/>
</dbReference>
<dbReference type="PRINTS" id="PR00008">
    <property type="entry name" value="DAGPEDOMAIN"/>
</dbReference>
<dbReference type="SMART" id="SM00109">
    <property type="entry name" value="C1"/>
    <property type="match status" value="1"/>
</dbReference>
<dbReference type="SMART" id="SM00666">
    <property type="entry name" value="PB1"/>
    <property type="match status" value="1"/>
</dbReference>
<dbReference type="SMART" id="SM00133">
    <property type="entry name" value="S_TK_X"/>
    <property type="match status" value="1"/>
</dbReference>
<dbReference type="SMART" id="SM00220">
    <property type="entry name" value="S_TKc"/>
    <property type="match status" value="1"/>
</dbReference>
<dbReference type="SUPFAM" id="SSF54277">
    <property type="entry name" value="CAD &amp; PB1 domains"/>
    <property type="match status" value="1"/>
</dbReference>
<dbReference type="SUPFAM" id="SSF57889">
    <property type="entry name" value="Cysteine-rich domain"/>
    <property type="match status" value="1"/>
</dbReference>
<dbReference type="SUPFAM" id="SSF56112">
    <property type="entry name" value="Protein kinase-like (PK-like)"/>
    <property type="match status" value="1"/>
</dbReference>
<dbReference type="PROSITE" id="PS51285">
    <property type="entry name" value="AGC_KINASE_CTER"/>
    <property type="match status" value="1"/>
</dbReference>
<dbReference type="PROSITE" id="PS51745">
    <property type="entry name" value="PB1"/>
    <property type="match status" value="1"/>
</dbReference>
<dbReference type="PROSITE" id="PS00107">
    <property type="entry name" value="PROTEIN_KINASE_ATP"/>
    <property type="match status" value="1"/>
</dbReference>
<dbReference type="PROSITE" id="PS50011">
    <property type="entry name" value="PROTEIN_KINASE_DOM"/>
    <property type="match status" value="1"/>
</dbReference>
<dbReference type="PROSITE" id="PS00108">
    <property type="entry name" value="PROTEIN_KINASE_ST"/>
    <property type="match status" value="1"/>
</dbReference>
<dbReference type="PROSITE" id="PS00479">
    <property type="entry name" value="ZF_DAG_PE_1"/>
    <property type="match status" value="1"/>
</dbReference>
<dbReference type="PROSITE" id="PS50081">
    <property type="entry name" value="ZF_DAG_PE_2"/>
    <property type="match status" value="1"/>
</dbReference>
<gene>
    <name evidence="3" type="primary">pkc-3</name>
    <name type="ORF">CBG02381</name>
</gene>
<organism>
    <name type="scientific">Caenorhabditis briggsae</name>
    <dbReference type="NCBI Taxonomy" id="6238"/>
    <lineage>
        <taxon>Eukaryota</taxon>
        <taxon>Metazoa</taxon>
        <taxon>Ecdysozoa</taxon>
        <taxon>Nematoda</taxon>
        <taxon>Chromadorea</taxon>
        <taxon>Rhabditida</taxon>
        <taxon>Rhabditina</taxon>
        <taxon>Rhabditomorpha</taxon>
        <taxon>Rhabditoidea</taxon>
        <taxon>Rhabditidae</taxon>
        <taxon>Peloderinae</taxon>
        <taxon>Caenorhabditis</taxon>
    </lineage>
</organism>
<reference key="1">
    <citation type="journal article" date="2003" name="PLoS Biol.">
        <title>The genome sequence of Caenorhabditis briggsae: a platform for comparative genomics.</title>
        <authorList>
            <person name="Stein L.D."/>
            <person name="Bao Z."/>
            <person name="Blasiar D."/>
            <person name="Blumenthal T."/>
            <person name="Brent M.R."/>
            <person name="Chen N."/>
            <person name="Chinwalla A."/>
            <person name="Clarke L."/>
            <person name="Clee C."/>
            <person name="Coghlan A."/>
            <person name="Coulson A."/>
            <person name="D'Eustachio P."/>
            <person name="Fitch D.H.A."/>
            <person name="Fulton L.A."/>
            <person name="Fulton R.E."/>
            <person name="Griffiths-Jones S."/>
            <person name="Harris T.W."/>
            <person name="Hillier L.W."/>
            <person name="Kamath R."/>
            <person name="Kuwabara P.E."/>
            <person name="Mardis E.R."/>
            <person name="Marra M.A."/>
            <person name="Miner T.L."/>
            <person name="Minx P."/>
            <person name="Mullikin J.C."/>
            <person name="Plumb R.W."/>
            <person name="Rogers J."/>
            <person name="Schein J.E."/>
            <person name="Sohrmann M."/>
            <person name="Spieth J."/>
            <person name="Stajich J.E."/>
            <person name="Wei C."/>
            <person name="Willey D."/>
            <person name="Wilson R.K."/>
            <person name="Durbin R.M."/>
            <person name="Waterston R.H."/>
        </authorList>
    </citation>
    <scope>NUCLEOTIDE SEQUENCE [LARGE SCALE GENOMIC DNA]</scope>
    <source>
        <strain>AF16</strain>
    </source>
</reference>